<reference key="1">
    <citation type="submission" date="2007-04" db="EMBL/GenBank/DDBJ databases">
        <title>Complete sequence of chromosome of Mycobacterium gilvum PYR-GCK.</title>
        <authorList>
            <consortium name="US DOE Joint Genome Institute"/>
            <person name="Copeland A."/>
            <person name="Lucas S."/>
            <person name="Lapidus A."/>
            <person name="Barry K."/>
            <person name="Detter J.C."/>
            <person name="Glavina del Rio T."/>
            <person name="Hammon N."/>
            <person name="Israni S."/>
            <person name="Dalin E."/>
            <person name="Tice H."/>
            <person name="Pitluck S."/>
            <person name="Chain P."/>
            <person name="Malfatti S."/>
            <person name="Shin M."/>
            <person name="Vergez L."/>
            <person name="Schmutz J."/>
            <person name="Larimer F."/>
            <person name="Land M."/>
            <person name="Hauser L."/>
            <person name="Kyrpides N."/>
            <person name="Mikhailova N."/>
            <person name="Miller C."/>
            <person name="Richardson P."/>
        </authorList>
    </citation>
    <scope>NUCLEOTIDE SEQUENCE [LARGE SCALE GENOMIC DNA]</scope>
    <source>
        <strain>PYR-GCK</strain>
    </source>
</reference>
<keyword id="KW-0143">Chaperone</keyword>
<keyword id="KW-0963">Cytoplasm</keyword>
<keyword id="KW-0996">Nickel insertion</keyword>
<evidence type="ECO:0000255" key="1">
    <source>
        <dbReference type="HAMAP-Rule" id="MF_01384"/>
    </source>
</evidence>
<organism>
    <name type="scientific">Mycolicibacterium gilvum (strain PYR-GCK)</name>
    <name type="common">Mycobacterium gilvum (strain PYR-GCK)</name>
    <dbReference type="NCBI Taxonomy" id="350054"/>
    <lineage>
        <taxon>Bacteria</taxon>
        <taxon>Bacillati</taxon>
        <taxon>Actinomycetota</taxon>
        <taxon>Actinomycetes</taxon>
        <taxon>Mycobacteriales</taxon>
        <taxon>Mycobacteriaceae</taxon>
        <taxon>Mycolicibacterium</taxon>
    </lineage>
</organism>
<gene>
    <name evidence="1" type="primary">ureD</name>
    <name type="ordered locus">Mflv_1683</name>
</gene>
<name>URED_MYCGI</name>
<protein>
    <recommendedName>
        <fullName evidence="1">Urease accessory protein UreD</fullName>
    </recommendedName>
</protein>
<proteinExistence type="inferred from homology"/>
<feature type="chain" id="PRO_0000340465" description="Urease accessory protein UreD">
    <location>
        <begin position="1"/>
        <end position="273"/>
    </location>
</feature>
<accession>A4T7D6</accession>
<sequence>MTAPTIQPGELGIEVVADSAGRTRTASLRQRYPQRVTMPLHCDPDRPGAVTLCVQSPSGGTFSDDELRTTVACRAGSHLHLTTQSATQVFAGDGAGARHHLDFTVDRGAALEYYPGTVIPHTDSTFTQTIEVNVETGGLYLGWEAVAAGRLAHGERYGYHTYDSAILARVDGRAVARDRQVIRPGTDAMSLLEGDYLATLLVVAPGADIEALLRRLRATLDDGSGVSGGAGRLPAHAGVFLRLIAQRAPDLHRARTDLFAAARRELLPGKDES</sequence>
<comment type="function">
    <text evidence="1">Required for maturation of urease via the functional incorporation of the urease nickel metallocenter.</text>
</comment>
<comment type="subunit">
    <text evidence="1">UreD, UreF and UreG form a complex that acts as a GTP-hydrolysis-dependent molecular chaperone, activating the urease apoprotein by helping to assemble the nickel containing metallocenter of UreC. The UreE protein probably delivers the nickel.</text>
</comment>
<comment type="subcellular location">
    <subcellularLocation>
        <location evidence="1">Cytoplasm</location>
    </subcellularLocation>
</comment>
<comment type="similarity">
    <text evidence="1">Belongs to the UreD family.</text>
</comment>
<dbReference type="EMBL" id="CP000656">
    <property type="protein sequence ID" value="ABP44165.1"/>
    <property type="molecule type" value="Genomic_DNA"/>
</dbReference>
<dbReference type="SMR" id="A4T7D6"/>
<dbReference type="STRING" id="350054.Mflv_1683"/>
<dbReference type="KEGG" id="mgi:Mflv_1683"/>
<dbReference type="eggNOG" id="COG0829">
    <property type="taxonomic scope" value="Bacteria"/>
</dbReference>
<dbReference type="HOGENOM" id="CLU_056339_1_0_11"/>
<dbReference type="OrthoDB" id="9807968at2"/>
<dbReference type="GO" id="GO:0005737">
    <property type="term" value="C:cytoplasm"/>
    <property type="evidence" value="ECO:0007669"/>
    <property type="project" value="UniProtKB-SubCell"/>
</dbReference>
<dbReference type="GO" id="GO:0016151">
    <property type="term" value="F:nickel cation binding"/>
    <property type="evidence" value="ECO:0007669"/>
    <property type="project" value="UniProtKB-UniRule"/>
</dbReference>
<dbReference type="HAMAP" id="MF_01384">
    <property type="entry name" value="UreD"/>
    <property type="match status" value="1"/>
</dbReference>
<dbReference type="InterPro" id="IPR002669">
    <property type="entry name" value="UreD"/>
</dbReference>
<dbReference type="PANTHER" id="PTHR33643">
    <property type="entry name" value="UREASE ACCESSORY PROTEIN D"/>
    <property type="match status" value="1"/>
</dbReference>
<dbReference type="PANTHER" id="PTHR33643:SF1">
    <property type="entry name" value="UREASE ACCESSORY PROTEIN D"/>
    <property type="match status" value="1"/>
</dbReference>
<dbReference type="Pfam" id="PF01774">
    <property type="entry name" value="UreD"/>
    <property type="match status" value="1"/>
</dbReference>